<sequence>MPRKGPAPKRPLVNDPVYGSQLVTQLVNKVLLKGKKSLAERIVYGALENAREKTGTDPVITLKRALDNVKPALEVRSRRVGGATYQVPVEVRPDRSTTLALRWLVSFSRQRREKTMVERLANEILDASNGLGASVKRREDTHKMAEANRAFAHYRW</sequence>
<accession>Q73SD3</accession>
<evidence type="ECO:0000255" key="1">
    <source>
        <dbReference type="HAMAP-Rule" id="MF_00480"/>
    </source>
</evidence>
<evidence type="ECO:0000305" key="2"/>
<keyword id="KW-1185">Reference proteome</keyword>
<keyword id="KW-0687">Ribonucleoprotein</keyword>
<keyword id="KW-0689">Ribosomal protein</keyword>
<keyword id="KW-0694">RNA-binding</keyword>
<keyword id="KW-0699">rRNA-binding</keyword>
<keyword id="KW-0820">tRNA-binding</keyword>
<comment type="function">
    <text evidence="1">One of the primary rRNA binding proteins, it binds directly to 16S rRNA where it nucleates assembly of the head domain of the 30S subunit. Is located at the subunit interface close to the decoding center, probably blocks exit of the E-site tRNA.</text>
</comment>
<comment type="subunit">
    <text evidence="1">Part of the 30S ribosomal subunit. Contacts proteins S9 and S11.</text>
</comment>
<comment type="similarity">
    <text evidence="1">Belongs to the universal ribosomal protein uS7 family.</text>
</comment>
<feature type="chain" id="PRO_0000124301" description="Small ribosomal subunit protein uS7">
    <location>
        <begin position="1"/>
        <end position="156"/>
    </location>
</feature>
<dbReference type="EMBL" id="AE016958">
    <property type="protein sequence ID" value="AAS06691.1"/>
    <property type="molecule type" value="Genomic_DNA"/>
</dbReference>
<dbReference type="RefSeq" id="WP_003873540.1">
    <property type="nucleotide sequence ID" value="NZ_CP106873.1"/>
</dbReference>
<dbReference type="SMR" id="Q73SD3"/>
<dbReference type="STRING" id="262316.MAP_4141"/>
<dbReference type="GeneID" id="75272005"/>
<dbReference type="KEGG" id="mpa:MAP_4141"/>
<dbReference type="eggNOG" id="COG0049">
    <property type="taxonomic scope" value="Bacteria"/>
</dbReference>
<dbReference type="HOGENOM" id="CLU_072226_1_1_11"/>
<dbReference type="Proteomes" id="UP000000580">
    <property type="component" value="Chromosome"/>
</dbReference>
<dbReference type="GO" id="GO:0015935">
    <property type="term" value="C:small ribosomal subunit"/>
    <property type="evidence" value="ECO:0007669"/>
    <property type="project" value="InterPro"/>
</dbReference>
<dbReference type="GO" id="GO:0019843">
    <property type="term" value="F:rRNA binding"/>
    <property type="evidence" value="ECO:0007669"/>
    <property type="project" value="UniProtKB-UniRule"/>
</dbReference>
<dbReference type="GO" id="GO:0003735">
    <property type="term" value="F:structural constituent of ribosome"/>
    <property type="evidence" value="ECO:0007669"/>
    <property type="project" value="InterPro"/>
</dbReference>
<dbReference type="GO" id="GO:0000049">
    <property type="term" value="F:tRNA binding"/>
    <property type="evidence" value="ECO:0007669"/>
    <property type="project" value="UniProtKB-UniRule"/>
</dbReference>
<dbReference type="GO" id="GO:0006412">
    <property type="term" value="P:translation"/>
    <property type="evidence" value="ECO:0007669"/>
    <property type="project" value="UniProtKB-UniRule"/>
</dbReference>
<dbReference type="CDD" id="cd14869">
    <property type="entry name" value="uS7_Bacteria"/>
    <property type="match status" value="1"/>
</dbReference>
<dbReference type="FunFam" id="1.10.455.10:FF:000001">
    <property type="entry name" value="30S ribosomal protein S7"/>
    <property type="match status" value="1"/>
</dbReference>
<dbReference type="Gene3D" id="1.10.455.10">
    <property type="entry name" value="Ribosomal protein S7 domain"/>
    <property type="match status" value="1"/>
</dbReference>
<dbReference type="HAMAP" id="MF_00480_B">
    <property type="entry name" value="Ribosomal_uS7_B"/>
    <property type="match status" value="1"/>
</dbReference>
<dbReference type="InterPro" id="IPR000235">
    <property type="entry name" value="Ribosomal_uS7"/>
</dbReference>
<dbReference type="InterPro" id="IPR005717">
    <property type="entry name" value="Ribosomal_uS7_bac/org-type"/>
</dbReference>
<dbReference type="InterPro" id="IPR020606">
    <property type="entry name" value="Ribosomal_uS7_CS"/>
</dbReference>
<dbReference type="InterPro" id="IPR023798">
    <property type="entry name" value="Ribosomal_uS7_dom"/>
</dbReference>
<dbReference type="InterPro" id="IPR036823">
    <property type="entry name" value="Ribosomal_uS7_dom_sf"/>
</dbReference>
<dbReference type="NCBIfam" id="TIGR01029">
    <property type="entry name" value="rpsG_bact"/>
    <property type="match status" value="1"/>
</dbReference>
<dbReference type="PANTHER" id="PTHR11205">
    <property type="entry name" value="RIBOSOMAL PROTEIN S7"/>
    <property type="match status" value="1"/>
</dbReference>
<dbReference type="Pfam" id="PF00177">
    <property type="entry name" value="Ribosomal_S7"/>
    <property type="match status" value="1"/>
</dbReference>
<dbReference type="PIRSF" id="PIRSF002122">
    <property type="entry name" value="RPS7p_RPS7a_RPS5e_RPS7o"/>
    <property type="match status" value="1"/>
</dbReference>
<dbReference type="SUPFAM" id="SSF47973">
    <property type="entry name" value="Ribosomal protein S7"/>
    <property type="match status" value="1"/>
</dbReference>
<dbReference type="PROSITE" id="PS00052">
    <property type="entry name" value="RIBOSOMAL_S7"/>
    <property type="match status" value="1"/>
</dbReference>
<protein>
    <recommendedName>
        <fullName evidence="1">Small ribosomal subunit protein uS7</fullName>
    </recommendedName>
    <alternativeName>
        <fullName evidence="2">30S ribosomal protein S7</fullName>
    </alternativeName>
</protein>
<reference key="1">
    <citation type="journal article" date="2005" name="Proc. Natl. Acad. Sci. U.S.A.">
        <title>The complete genome sequence of Mycobacterium avium subspecies paratuberculosis.</title>
        <authorList>
            <person name="Li L."/>
            <person name="Bannantine J.P."/>
            <person name="Zhang Q."/>
            <person name="Amonsin A."/>
            <person name="May B.J."/>
            <person name="Alt D."/>
            <person name="Banerji N."/>
            <person name="Kanjilal S."/>
            <person name="Kapur V."/>
        </authorList>
    </citation>
    <scope>NUCLEOTIDE SEQUENCE [LARGE SCALE GENOMIC DNA]</scope>
    <source>
        <strain>ATCC BAA-968 / K-10</strain>
    </source>
</reference>
<gene>
    <name evidence="1" type="primary">rpsG</name>
    <name type="ordered locus">MAP_4141</name>
</gene>
<proteinExistence type="inferred from homology"/>
<organism>
    <name type="scientific">Mycolicibacterium paratuberculosis (strain ATCC BAA-968 / K-10)</name>
    <name type="common">Mycobacterium paratuberculosis</name>
    <dbReference type="NCBI Taxonomy" id="262316"/>
    <lineage>
        <taxon>Bacteria</taxon>
        <taxon>Bacillati</taxon>
        <taxon>Actinomycetota</taxon>
        <taxon>Actinomycetes</taxon>
        <taxon>Mycobacteriales</taxon>
        <taxon>Mycobacteriaceae</taxon>
        <taxon>Mycobacterium</taxon>
        <taxon>Mycobacterium avium complex (MAC)</taxon>
    </lineage>
</organism>
<name>RS7_MYCPA</name>